<reference key="1">
    <citation type="journal article" date="2007" name="PLoS Genet.">
        <title>Patterns and implications of gene gain and loss in the evolution of Prochlorococcus.</title>
        <authorList>
            <person name="Kettler G.C."/>
            <person name="Martiny A.C."/>
            <person name="Huang K."/>
            <person name="Zucker J."/>
            <person name="Coleman M.L."/>
            <person name="Rodrigue S."/>
            <person name="Chen F."/>
            <person name="Lapidus A."/>
            <person name="Ferriera S."/>
            <person name="Johnson J."/>
            <person name="Steglich C."/>
            <person name="Church G.M."/>
            <person name="Richardson P."/>
            <person name="Chisholm S.W."/>
        </authorList>
    </citation>
    <scope>NUCLEOTIDE SEQUENCE [LARGE SCALE GENOMIC DNA]</scope>
    <source>
        <strain>MIT 9215</strain>
    </source>
</reference>
<protein>
    <recommendedName>
        <fullName evidence="1">Cysteine--tRNA ligase</fullName>
        <ecNumber evidence="1">6.1.1.16</ecNumber>
    </recommendedName>
    <alternativeName>
        <fullName evidence="1">Cysteinyl-tRNA synthetase</fullName>
        <shortName evidence="1">CysRS</shortName>
    </alternativeName>
</protein>
<proteinExistence type="inferred from homology"/>
<keyword id="KW-0030">Aminoacyl-tRNA synthetase</keyword>
<keyword id="KW-0067">ATP-binding</keyword>
<keyword id="KW-0963">Cytoplasm</keyword>
<keyword id="KW-0436">Ligase</keyword>
<keyword id="KW-0479">Metal-binding</keyword>
<keyword id="KW-0547">Nucleotide-binding</keyword>
<keyword id="KW-0648">Protein biosynthesis</keyword>
<keyword id="KW-0862">Zinc</keyword>
<evidence type="ECO:0000255" key="1">
    <source>
        <dbReference type="HAMAP-Rule" id="MF_00041"/>
    </source>
</evidence>
<feature type="chain" id="PRO_0000332872" description="Cysteine--tRNA ligase">
    <location>
        <begin position="1"/>
        <end position="489"/>
    </location>
</feature>
<feature type="short sequence motif" description="'HIGH' region">
    <location>
        <begin position="29"/>
        <end position="39"/>
    </location>
</feature>
<feature type="short sequence motif" description="'KMSKS' region">
    <location>
        <begin position="268"/>
        <end position="272"/>
    </location>
</feature>
<feature type="binding site" evidence="1">
    <location>
        <position position="27"/>
    </location>
    <ligand>
        <name>Zn(2+)</name>
        <dbReference type="ChEBI" id="CHEBI:29105"/>
    </ligand>
</feature>
<feature type="binding site" evidence="1">
    <location>
        <position position="211"/>
    </location>
    <ligand>
        <name>Zn(2+)</name>
        <dbReference type="ChEBI" id="CHEBI:29105"/>
    </ligand>
</feature>
<feature type="binding site" evidence="1">
    <location>
        <position position="236"/>
    </location>
    <ligand>
        <name>Zn(2+)</name>
        <dbReference type="ChEBI" id="CHEBI:29105"/>
    </ligand>
</feature>
<feature type="binding site" evidence="1">
    <location>
        <position position="240"/>
    </location>
    <ligand>
        <name>Zn(2+)</name>
        <dbReference type="ChEBI" id="CHEBI:29105"/>
    </ligand>
</feature>
<feature type="binding site" evidence="1">
    <location>
        <position position="271"/>
    </location>
    <ligand>
        <name>ATP</name>
        <dbReference type="ChEBI" id="CHEBI:30616"/>
    </ligand>
</feature>
<comment type="catalytic activity">
    <reaction evidence="1">
        <text>tRNA(Cys) + L-cysteine + ATP = L-cysteinyl-tRNA(Cys) + AMP + diphosphate</text>
        <dbReference type="Rhea" id="RHEA:17773"/>
        <dbReference type="Rhea" id="RHEA-COMP:9661"/>
        <dbReference type="Rhea" id="RHEA-COMP:9679"/>
        <dbReference type="ChEBI" id="CHEBI:30616"/>
        <dbReference type="ChEBI" id="CHEBI:33019"/>
        <dbReference type="ChEBI" id="CHEBI:35235"/>
        <dbReference type="ChEBI" id="CHEBI:78442"/>
        <dbReference type="ChEBI" id="CHEBI:78517"/>
        <dbReference type="ChEBI" id="CHEBI:456215"/>
        <dbReference type="EC" id="6.1.1.16"/>
    </reaction>
</comment>
<comment type="cofactor">
    <cofactor evidence="1">
        <name>Zn(2+)</name>
        <dbReference type="ChEBI" id="CHEBI:29105"/>
    </cofactor>
    <text evidence="1">Binds 1 zinc ion per subunit.</text>
</comment>
<comment type="subunit">
    <text evidence="1">Monomer.</text>
</comment>
<comment type="subcellular location">
    <subcellularLocation>
        <location evidence="1">Cytoplasm</location>
    </subcellularLocation>
</comment>
<comment type="similarity">
    <text evidence="1">Belongs to the class-I aminoacyl-tRNA synthetase family.</text>
</comment>
<name>SYC_PROM2</name>
<accession>A8G5S9</accession>
<sequence length="489" mass="56533">MIKLFNTLSKRVEVFKPIDDVVKIYCCGVTVYDLCHLGHARSYIVWDILRRFLIYSDFKVKYVQNFTDIDDKILKRAKEESSSMKEVSEKNIIEFHKDMDSLGIMRPDSMPKATNHICNICSFITILEDKGYAYSRDGDVYYSVFKNKNYGKLSNQNIQEQNINQQGRMANDENSKKLNPQDFALWKKAKDDEPFFDSPWGKGRPGWHIECSAMVKDELGDTIDIHLGGSDLIFPHHENEIAQSEAANGKKLANYWLHNGMVNVNGQKMSKSLKNFTTIRELIKSGISPMSLRYFVMTVNYRKPLDFTEEALRSASEAWKNINIALSFMDLTKGAFRYIDKNESIEEEYKEKISFELSQKKLKFSEALGNDLNTAGAIAIIYDLAKPLKNFLNQFQRVEGFKIDLNEKFFLIENFKTLEKLTKVLGLEKEVLVKESKITEEEISSLINERLKAKKGKNYAKADEIRNLLNEKGIELIDQSKEITTWIRL</sequence>
<organism>
    <name type="scientific">Prochlorococcus marinus (strain MIT 9215)</name>
    <dbReference type="NCBI Taxonomy" id="93060"/>
    <lineage>
        <taxon>Bacteria</taxon>
        <taxon>Bacillati</taxon>
        <taxon>Cyanobacteriota</taxon>
        <taxon>Cyanophyceae</taxon>
        <taxon>Synechococcales</taxon>
        <taxon>Prochlorococcaceae</taxon>
        <taxon>Prochlorococcus</taxon>
    </lineage>
</organism>
<gene>
    <name evidence="1" type="primary">cysS</name>
    <name type="ordered locus">P9215_13451</name>
</gene>
<dbReference type="EC" id="6.1.1.16" evidence="1"/>
<dbReference type="EMBL" id="CP000825">
    <property type="protein sequence ID" value="ABV50960.1"/>
    <property type="molecule type" value="Genomic_DNA"/>
</dbReference>
<dbReference type="RefSeq" id="WP_012008019.1">
    <property type="nucleotide sequence ID" value="NC_009840.1"/>
</dbReference>
<dbReference type="SMR" id="A8G5S9"/>
<dbReference type="STRING" id="93060.P9215_13451"/>
<dbReference type="KEGG" id="pmh:P9215_13451"/>
<dbReference type="eggNOG" id="COG0215">
    <property type="taxonomic scope" value="Bacteria"/>
</dbReference>
<dbReference type="HOGENOM" id="CLU_013528_0_1_3"/>
<dbReference type="OrthoDB" id="9815130at2"/>
<dbReference type="Proteomes" id="UP000002014">
    <property type="component" value="Chromosome"/>
</dbReference>
<dbReference type="GO" id="GO:0005829">
    <property type="term" value="C:cytosol"/>
    <property type="evidence" value="ECO:0007669"/>
    <property type="project" value="TreeGrafter"/>
</dbReference>
<dbReference type="GO" id="GO:0005524">
    <property type="term" value="F:ATP binding"/>
    <property type="evidence" value="ECO:0007669"/>
    <property type="project" value="UniProtKB-UniRule"/>
</dbReference>
<dbReference type="GO" id="GO:0004817">
    <property type="term" value="F:cysteine-tRNA ligase activity"/>
    <property type="evidence" value="ECO:0007669"/>
    <property type="project" value="UniProtKB-UniRule"/>
</dbReference>
<dbReference type="GO" id="GO:0008270">
    <property type="term" value="F:zinc ion binding"/>
    <property type="evidence" value="ECO:0007669"/>
    <property type="project" value="UniProtKB-UniRule"/>
</dbReference>
<dbReference type="GO" id="GO:0006423">
    <property type="term" value="P:cysteinyl-tRNA aminoacylation"/>
    <property type="evidence" value="ECO:0007669"/>
    <property type="project" value="UniProtKB-UniRule"/>
</dbReference>
<dbReference type="CDD" id="cd00672">
    <property type="entry name" value="CysRS_core"/>
    <property type="match status" value="1"/>
</dbReference>
<dbReference type="FunFam" id="3.40.50.620:FF:000009">
    <property type="entry name" value="Cysteine--tRNA ligase"/>
    <property type="match status" value="1"/>
</dbReference>
<dbReference type="Gene3D" id="1.20.120.1910">
    <property type="entry name" value="Cysteine-tRNA ligase, C-terminal anti-codon recognition domain"/>
    <property type="match status" value="1"/>
</dbReference>
<dbReference type="Gene3D" id="3.40.50.620">
    <property type="entry name" value="HUPs"/>
    <property type="match status" value="1"/>
</dbReference>
<dbReference type="HAMAP" id="MF_00041">
    <property type="entry name" value="Cys_tRNA_synth"/>
    <property type="match status" value="1"/>
</dbReference>
<dbReference type="InterPro" id="IPR015803">
    <property type="entry name" value="Cys-tRNA-ligase"/>
</dbReference>
<dbReference type="InterPro" id="IPR015273">
    <property type="entry name" value="Cys-tRNA-synt_Ia_DALR"/>
</dbReference>
<dbReference type="InterPro" id="IPR024909">
    <property type="entry name" value="Cys-tRNA/MSH_ligase"/>
</dbReference>
<dbReference type="InterPro" id="IPR014729">
    <property type="entry name" value="Rossmann-like_a/b/a_fold"/>
</dbReference>
<dbReference type="InterPro" id="IPR032678">
    <property type="entry name" value="tRNA-synt_1_cat_dom"/>
</dbReference>
<dbReference type="InterPro" id="IPR009080">
    <property type="entry name" value="tRNAsynth_Ia_anticodon-bd"/>
</dbReference>
<dbReference type="NCBIfam" id="TIGR00435">
    <property type="entry name" value="cysS"/>
    <property type="match status" value="1"/>
</dbReference>
<dbReference type="PANTHER" id="PTHR10890:SF3">
    <property type="entry name" value="CYSTEINE--TRNA LIGASE, CYTOPLASMIC"/>
    <property type="match status" value="1"/>
</dbReference>
<dbReference type="PANTHER" id="PTHR10890">
    <property type="entry name" value="CYSTEINYL-TRNA SYNTHETASE"/>
    <property type="match status" value="1"/>
</dbReference>
<dbReference type="Pfam" id="PF09190">
    <property type="entry name" value="DALR_2"/>
    <property type="match status" value="1"/>
</dbReference>
<dbReference type="Pfam" id="PF01406">
    <property type="entry name" value="tRNA-synt_1e"/>
    <property type="match status" value="1"/>
</dbReference>
<dbReference type="PRINTS" id="PR00983">
    <property type="entry name" value="TRNASYNTHCYS"/>
</dbReference>
<dbReference type="SMART" id="SM00840">
    <property type="entry name" value="DALR_2"/>
    <property type="match status" value="1"/>
</dbReference>
<dbReference type="SUPFAM" id="SSF47323">
    <property type="entry name" value="Anticodon-binding domain of a subclass of class I aminoacyl-tRNA synthetases"/>
    <property type="match status" value="1"/>
</dbReference>
<dbReference type="SUPFAM" id="SSF52374">
    <property type="entry name" value="Nucleotidylyl transferase"/>
    <property type="match status" value="1"/>
</dbReference>